<feature type="chain" id="PRO_0000158471" description="Ribose-5-phosphate isomerase A">
    <location>
        <begin position="1"/>
        <end position="223"/>
    </location>
</feature>
<feature type="active site" description="Proton acceptor" evidence="1">
    <location>
        <position position="104"/>
    </location>
</feature>
<feature type="binding site" evidence="1">
    <location>
        <begin position="26"/>
        <end position="29"/>
    </location>
    <ligand>
        <name>substrate</name>
    </ligand>
</feature>
<feature type="binding site" evidence="1">
    <location>
        <begin position="82"/>
        <end position="85"/>
    </location>
    <ligand>
        <name>substrate</name>
    </ligand>
</feature>
<feature type="binding site" evidence="1">
    <location>
        <begin position="95"/>
        <end position="98"/>
    </location>
    <ligand>
        <name>substrate</name>
    </ligand>
</feature>
<feature type="binding site" evidence="1">
    <location>
        <position position="122"/>
    </location>
    <ligand>
        <name>substrate</name>
    </ligand>
</feature>
<proteinExistence type="inferred from homology"/>
<dbReference type="EC" id="5.3.1.6" evidence="1"/>
<dbReference type="EMBL" id="AL766849">
    <property type="protein sequence ID" value="CAD46915.1"/>
    <property type="molecule type" value="Genomic_DNA"/>
</dbReference>
<dbReference type="RefSeq" id="WP_000343883.1">
    <property type="nucleotide sequence ID" value="NC_004368.1"/>
</dbReference>
<dbReference type="SMR" id="Q8E4Y6"/>
<dbReference type="KEGG" id="san:gbs1256"/>
<dbReference type="eggNOG" id="COG0120">
    <property type="taxonomic scope" value="Bacteria"/>
</dbReference>
<dbReference type="HOGENOM" id="CLU_056590_1_0_9"/>
<dbReference type="UniPathway" id="UPA00115">
    <property type="reaction ID" value="UER00412"/>
</dbReference>
<dbReference type="Proteomes" id="UP000000823">
    <property type="component" value="Chromosome"/>
</dbReference>
<dbReference type="GO" id="GO:0004751">
    <property type="term" value="F:ribose-5-phosphate isomerase activity"/>
    <property type="evidence" value="ECO:0007669"/>
    <property type="project" value="UniProtKB-UniRule"/>
</dbReference>
<dbReference type="GO" id="GO:0009052">
    <property type="term" value="P:pentose-phosphate shunt, non-oxidative branch"/>
    <property type="evidence" value="ECO:0007669"/>
    <property type="project" value="UniProtKB-UniRule"/>
</dbReference>
<dbReference type="CDD" id="cd01398">
    <property type="entry name" value="RPI_A"/>
    <property type="match status" value="1"/>
</dbReference>
<dbReference type="FunFam" id="3.40.50.1360:FF:000001">
    <property type="entry name" value="Ribose-5-phosphate isomerase A"/>
    <property type="match status" value="1"/>
</dbReference>
<dbReference type="Gene3D" id="3.30.70.260">
    <property type="match status" value="1"/>
</dbReference>
<dbReference type="Gene3D" id="3.40.50.1360">
    <property type="match status" value="1"/>
</dbReference>
<dbReference type="HAMAP" id="MF_00170">
    <property type="entry name" value="Rib_5P_isom_A"/>
    <property type="match status" value="1"/>
</dbReference>
<dbReference type="InterPro" id="IPR037171">
    <property type="entry name" value="NagB/RpiA_transferase-like"/>
</dbReference>
<dbReference type="InterPro" id="IPR050262">
    <property type="entry name" value="Ribose-5P_isomerase"/>
</dbReference>
<dbReference type="InterPro" id="IPR020672">
    <property type="entry name" value="Ribose5P_isomerase_typA_subgr"/>
</dbReference>
<dbReference type="InterPro" id="IPR004788">
    <property type="entry name" value="Ribose5P_isomerase_type_A"/>
</dbReference>
<dbReference type="NCBIfam" id="NF001924">
    <property type="entry name" value="PRK00702.1"/>
    <property type="match status" value="1"/>
</dbReference>
<dbReference type="NCBIfam" id="TIGR00021">
    <property type="entry name" value="rpiA"/>
    <property type="match status" value="1"/>
</dbReference>
<dbReference type="PANTHER" id="PTHR43748">
    <property type="entry name" value="RIBOSE-5-PHOSPHATE ISOMERASE 3, CHLOROPLASTIC-RELATED"/>
    <property type="match status" value="1"/>
</dbReference>
<dbReference type="PANTHER" id="PTHR43748:SF3">
    <property type="entry name" value="RIBOSE-5-PHOSPHATE ISOMERASE 3, CHLOROPLASTIC-RELATED"/>
    <property type="match status" value="1"/>
</dbReference>
<dbReference type="Pfam" id="PF06026">
    <property type="entry name" value="Rib_5-P_isom_A"/>
    <property type="match status" value="1"/>
</dbReference>
<dbReference type="SUPFAM" id="SSF75445">
    <property type="entry name" value="D-ribose-5-phosphate isomerase (RpiA), lid domain"/>
    <property type="match status" value="1"/>
</dbReference>
<dbReference type="SUPFAM" id="SSF100950">
    <property type="entry name" value="NagB/RpiA/CoA transferase-like"/>
    <property type="match status" value="1"/>
</dbReference>
<accession>Q8E4Y6</accession>
<evidence type="ECO:0000255" key="1">
    <source>
        <dbReference type="HAMAP-Rule" id="MF_00170"/>
    </source>
</evidence>
<name>RPIA_STRA3</name>
<comment type="function">
    <text evidence="1">Catalyzes the reversible conversion of ribose-5-phosphate to ribulose 5-phosphate.</text>
</comment>
<comment type="catalytic activity">
    <reaction evidence="1">
        <text>aldehydo-D-ribose 5-phosphate = D-ribulose 5-phosphate</text>
        <dbReference type="Rhea" id="RHEA:14657"/>
        <dbReference type="ChEBI" id="CHEBI:58121"/>
        <dbReference type="ChEBI" id="CHEBI:58273"/>
        <dbReference type="EC" id="5.3.1.6"/>
    </reaction>
</comment>
<comment type="pathway">
    <text evidence="1">Carbohydrate degradation; pentose phosphate pathway; D-ribose 5-phosphate from D-ribulose 5-phosphate (non-oxidative stage): step 1/1.</text>
</comment>
<comment type="subunit">
    <text evidence="1">Homodimer.</text>
</comment>
<comment type="similarity">
    <text evidence="1">Belongs to the ribose 5-phosphate isomerase family.</text>
</comment>
<organism>
    <name type="scientific">Streptococcus agalactiae serotype III (strain NEM316)</name>
    <dbReference type="NCBI Taxonomy" id="211110"/>
    <lineage>
        <taxon>Bacteria</taxon>
        <taxon>Bacillati</taxon>
        <taxon>Bacillota</taxon>
        <taxon>Bacilli</taxon>
        <taxon>Lactobacillales</taxon>
        <taxon>Streptococcaceae</taxon>
        <taxon>Streptococcus</taxon>
    </lineage>
</organism>
<protein>
    <recommendedName>
        <fullName evidence="1">Ribose-5-phosphate isomerase A</fullName>
        <ecNumber evidence="1">5.3.1.6</ecNumber>
    </recommendedName>
    <alternativeName>
        <fullName evidence="1">Phosphoriboisomerase A</fullName>
        <shortName evidence="1">PRI</shortName>
    </alternativeName>
</protein>
<sequence>MDELKKLAGVTAAKYVKNGMIVGLGTGSTAYFFVEEIGRRVKEEGLQVVGVTTSNRTTEQARGLGIPLKSADDIDVIDVTVDGADEVDPDFNGIKGGGGALLMEKIVATPTKEYIWVVDESKLVETLGAFKLPVEVVRYGSERLFRVFKSKGYCPSFRETEGDRFITDMGNYIIDLDLKKIEDPKQLANELDHTVGVVEHGLFNSMVNKVIVAGKNGLDILEK</sequence>
<keyword id="KW-0413">Isomerase</keyword>
<gene>
    <name evidence="1" type="primary">rpiA</name>
    <name type="ordered locus">gbs1256</name>
</gene>
<reference key="1">
    <citation type="journal article" date="2002" name="Mol. Microbiol.">
        <title>Genome sequence of Streptococcus agalactiae, a pathogen causing invasive neonatal disease.</title>
        <authorList>
            <person name="Glaser P."/>
            <person name="Rusniok C."/>
            <person name="Buchrieser C."/>
            <person name="Chevalier F."/>
            <person name="Frangeul L."/>
            <person name="Msadek T."/>
            <person name="Zouine M."/>
            <person name="Couve E."/>
            <person name="Lalioui L."/>
            <person name="Poyart C."/>
            <person name="Trieu-Cuot P."/>
            <person name="Kunst F."/>
        </authorList>
    </citation>
    <scope>NUCLEOTIDE SEQUENCE [LARGE SCALE GENOMIC DNA]</scope>
    <source>
        <strain>NEM316</strain>
    </source>
</reference>